<organism>
    <name type="scientific">Dechloromonas aromatica (strain RCB)</name>
    <dbReference type="NCBI Taxonomy" id="159087"/>
    <lineage>
        <taxon>Bacteria</taxon>
        <taxon>Pseudomonadati</taxon>
        <taxon>Pseudomonadota</taxon>
        <taxon>Betaproteobacteria</taxon>
        <taxon>Rhodocyclales</taxon>
        <taxon>Azonexaceae</taxon>
        <taxon>Dechloromonas</taxon>
    </lineage>
</organism>
<gene>
    <name evidence="1" type="primary">yidC</name>
    <name type="ordered locus">Daro_4201</name>
</gene>
<name>YIDC_DECAR</name>
<feature type="chain" id="PRO_1000070084" description="Membrane protein insertase YidC">
    <location>
        <begin position="1"/>
        <end position="547"/>
    </location>
</feature>
<feature type="transmembrane region" description="Helical" evidence="1">
    <location>
        <begin position="6"/>
        <end position="26"/>
    </location>
</feature>
<feature type="transmembrane region" description="Helical" evidence="1">
    <location>
        <begin position="328"/>
        <end position="348"/>
    </location>
</feature>
<feature type="transmembrane region" description="Helical" evidence="1">
    <location>
        <begin position="351"/>
        <end position="371"/>
    </location>
</feature>
<feature type="transmembrane region" description="Helical" evidence="1">
    <location>
        <begin position="425"/>
        <end position="445"/>
    </location>
</feature>
<feature type="transmembrane region" description="Helical" evidence="1">
    <location>
        <begin position="459"/>
        <end position="479"/>
    </location>
</feature>
<feature type="transmembrane region" description="Helical" evidence="1">
    <location>
        <begin position="499"/>
        <end position="519"/>
    </location>
</feature>
<accession>Q477Q4</accession>
<sequence length="547" mass="60341">MDTRRLILVLIFTFSSFMLWENWQKYNQPKPADAVAAAPVSGAAPTPSAALQAKAAPGTPPVATPVSTAETFSITTDLLKATISAQGGDLVSLELLNYKEHDDIQKNFDLFDAKHQYLAQAGLIGEGLPTHRTTFKHVGGATKLADGTDELKVRLESADQNGIKVAKILTFKRGSYLIDIAWEVANGSDKAIAPHAYYQLQRDDLAPAGETKMVSTFTGPAVFTDADKYQKVTFEHIADNKAKFTKTADNGWLAMVQHYFVSAWVPKDKTQREFYMRKVEGSNVFQAGVIVPVAEIAPGAKGEASVSLYAGPQMQSALKQVAPGLDLVVDYGWLTVVAAPIFWALEAIHKLVGNWGWAIVVLTIMIKAVFFPLSAASYKSMAKMKMLTPRLAQLKERFGDDKQRLNQEMMKLYQTEKVNPLGGCLPILVQIPVFIALYWVLLGAVEMRGAPWILWIKDLASADPYYILPVIMMVSMFVQTKLNPTPPDPIQAKVMMMMPLIFGFMFFWFPAGLVLYWVVNNVLSIAQQWQITRLIDAGGKAANDAKA</sequence>
<keyword id="KW-0997">Cell inner membrane</keyword>
<keyword id="KW-1003">Cell membrane</keyword>
<keyword id="KW-0143">Chaperone</keyword>
<keyword id="KW-0472">Membrane</keyword>
<keyword id="KW-0653">Protein transport</keyword>
<keyword id="KW-0812">Transmembrane</keyword>
<keyword id="KW-1133">Transmembrane helix</keyword>
<keyword id="KW-0813">Transport</keyword>
<reference key="1">
    <citation type="journal article" date="2009" name="BMC Genomics">
        <title>Metabolic analysis of the soil microbe Dechloromonas aromatica str. RCB: indications of a surprisingly complex life-style and cryptic anaerobic pathways for aromatic degradation.</title>
        <authorList>
            <person name="Salinero K.K."/>
            <person name="Keller K."/>
            <person name="Feil W.S."/>
            <person name="Feil H."/>
            <person name="Trong S."/>
            <person name="Di Bartolo G."/>
            <person name="Lapidus A."/>
        </authorList>
    </citation>
    <scope>NUCLEOTIDE SEQUENCE [LARGE SCALE GENOMIC DNA]</scope>
    <source>
        <strain>RCB</strain>
    </source>
</reference>
<evidence type="ECO:0000255" key="1">
    <source>
        <dbReference type="HAMAP-Rule" id="MF_01810"/>
    </source>
</evidence>
<protein>
    <recommendedName>
        <fullName evidence="1">Membrane protein insertase YidC</fullName>
    </recommendedName>
    <alternativeName>
        <fullName evidence="1">Foldase YidC</fullName>
    </alternativeName>
    <alternativeName>
        <fullName evidence="1">Membrane integrase YidC</fullName>
    </alternativeName>
    <alternativeName>
        <fullName evidence="1">Membrane protein YidC</fullName>
    </alternativeName>
</protein>
<dbReference type="EMBL" id="CP000089">
    <property type="protein sequence ID" value="AAZ48927.1"/>
    <property type="molecule type" value="Genomic_DNA"/>
</dbReference>
<dbReference type="SMR" id="Q477Q4"/>
<dbReference type="STRING" id="159087.Daro_4201"/>
<dbReference type="KEGG" id="dar:Daro_4201"/>
<dbReference type="eggNOG" id="COG0706">
    <property type="taxonomic scope" value="Bacteria"/>
</dbReference>
<dbReference type="HOGENOM" id="CLU_016535_3_0_4"/>
<dbReference type="OrthoDB" id="9780552at2"/>
<dbReference type="GO" id="GO:0005886">
    <property type="term" value="C:plasma membrane"/>
    <property type="evidence" value="ECO:0007669"/>
    <property type="project" value="UniProtKB-SubCell"/>
</dbReference>
<dbReference type="GO" id="GO:0032977">
    <property type="term" value="F:membrane insertase activity"/>
    <property type="evidence" value="ECO:0007669"/>
    <property type="project" value="InterPro"/>
</dbReference>
<dbReference type="GO" id="GO:0051205">
    <property type="term" value="P:protein insertion into membrane"/>
    <property type="evidence" value="ECO:0007669"/>
    <property type="project" value="TreeGrafter"/>
</dbReference>
<dbReference type="GO" id="GO:0015031">
    <property type="term" value="P:protein transport"/>
    <property type="evidence" value="ECO:0007669"/>
    <property type="project" value="UniProtKB-KW"/>
</dbReference>
<dbReference type="CDD" id="cd20070">
    <property type="entry name" value="5TM_YidC_Alb3"/>
    <property type="match status" value="1"/>
</dbReference>
<dbReference type="CDD" id="cd19961">
    <property type="entry name" value="EcYidC-like_peri"/>
    <property type="match status" value="1"/>
</dbReference>
<dbReference type="Gene3D" id="2.70.98.90">
    <property type="match status" value="1"/>
</dbReference>
<dbReference type="HAMAP" id="MF_01810">
    <property type="entry name" value="YidC_type1"/>
    <property type="match status" value="1"/>
</dbReference>
<dbReference type="InterPro" id="IPR019998">
    <property type="entry name" value="Membr_insert_YidC"/>
</dbReference>
<dbReference type="InterPro" id="IPR028053">
    <property type="entry name" value="Membr_insert_YidC_N"/>
</dbReference>
<dbReference type="InterPro" id="IPR001708">
    <property type="entry name" value="YidC/ALB3/OXA1/COX18"/>
</dbReference>
<dbReference type="InterPro" id="IPR028055">
    <property type="entry name" value="YidC/Oxa/ALB_C"/>
</dbReference>
<dbReference type="InterPro" id="IPR047196">
    <property type="entry name" value="YidC_ALB_C"/>
</dbReference>
<dbReference type="InterPro" id="IPR038221">
    <property type="entry name" value="YidC_periplasmic_sf"/>
</dbReference>
<dbReference type="NCBIfam" id="NF002352">
    <property type="entry name" value="PRK01318.1-3"/>
    <property type="match status" value="1"/>
</dbReference>
<dbReference type="NCBIfam" id="NF002353">
    <property type="entry name" value="PRK01318.1-4"/>
    <property type="match status" value="1"/>
</dbReference>
<dbReference type="NCBIfam" id="TIGR03593">
    <property type="entry name" value="yidC_nterm"/>
    <property type="match status" value="1"/>
</dbReference>
<dbReference type="NCBIfam" id="TIGR03592">
    <property type="entry name" value="yidC_oxa1_cterm"/>
    <property type="match status" value="1"/>
</dbReference>
<dbReference type="PANTHER" id="PTHR12428:SF65">
    <property type="entry name" value="CYTOCHROME C OXIDASE ASSEMBLY PROTEIN COX18, MITOCHONDRIAL"/>
    <property type="match status" value="1"/>
</dbReference>
<dbReference type="PANTHER" id="PTHR12428">
    <property type="entry name" value="OXA1"/>
    <property type="match status" value="1"/>
</dbReference>
<dbReference type="Pfam" id="PF02096">
    <property type="entry name" value="60KD_IMP"/>
    <property type="match status" value="1"/>
</dbReference>
<dbReference type="Pfam" id="PF14849">
    <property type="entry name" value="YidC_periplas"/>
    <property type="match status" value="1"/>
</dbReference>
<dbReference type="PRINTS" id="PR00701">
    <property type="entry name" value="60KDINNERMP"/>
</dbReference>
<dbReference type="PRINTS" id="PR01900">
    <property type="entry name" value="YIDCPROTEIN"/>
</dbReference>
<comment type="function">
    <text evidence="1">Required for the insertion and/or proper folding and/or complex formation of integral membrane proteins into the membrane. Involved in integration of membrane proteins that insert both dependently and independently of the Sec translocase complex, as well as at least some lipoproteins. Aids folding of multispanning membrane proteins.</text>
</comment>
<comment type="subunit">
    <text evidence="1">Interacts with the Sec translocase complex via SecD. Specifically interacts with transmembrane segments of nascent integral membrane proteins during membrane integration.</text>
</comment>
<comment type="subcellular location">
    <subcellularLocation>
        <location evidence="1">Cell inner membrane</location>
        <topology evidence="1">Multi-pass membrane protein</topology>
    </subcellularLocation>
</comment>
<comment type="similarity">
    <text evidence="1">Belongs to the OXA1/ALB3/YidC family. Type 1 subfamily.</text>
</comment>
<proteinExistence type="inferred from homology"/>